<evidence type="ECO:0000255" key="1"/>
<evidence type="ECO:0000255" key="2">
    <source>
        <dbReference type="PROSITE-ProRule" id="PRU00521"/>
    </source>
</evidence>
<evidence type="ECO:0000269" key="3">
    <source>
    </source>
</evidence>
<evidence type="ECO:0000269" key="4">
    <source>
    </source>
</evidence>
<evidence type="ECO:0000269" key="5">
    <source>
    </source>
</evidence>
<evidence type="ECO:0000269" key="6">
    <source>
    </source>
</evidence>
<evidence type="ECO:0000269" key="7">
    <source>
    </source>
</evidence>
<evidence type="ECO:0000269" key="8">
    <source>
    </source>
</evidence>
<evidence type="ECO:0000269" key="9">
    <source>
    </source>
</evidence>
<evidence type="ECO:0000269" key="10">
    <source>
    </source>
</evidence>
<evidence type="ECO:0000269" key="11">
    <source>
    </source>
</evidence>
<evidence type="ECO:0000303" key="12">
    <source>
    </source>
</evidence>
<evidence type="ECO:0000303" key="13">
    <source>
    </source>
</evidence>
<evidence type="ECO:0000303" key="14">
    <source>
    </source>
</evidence>
<evidence type="ECO:0000305" key="15">
    <source>
    </source>
</evidence>
<evidence type="ECO:0000312" key="16">
    <source>
        <dbReference type="HGNC" id="HGNC:17734"/>
    </source>
</evidence>
<evidence type="ECO:0007744" key="17">
    <source>
        <dbReference type="PDB" id="8JLN"/>
    </source>
</evidence>
<evidence type="ECO:0007744" key="18">
    <source>
        <dbReference type="PDB" id="8JLO"/>
    </source>
</evidence>
<evidence type="ECO:0007744" key="19">
    <source>
        <dbReference type="PDB" id="8JLP"/>
    </source>
</evidence>
<evidence type="ECO:0007744" key="20">
    <source>
        <dbReference type="PDB" id="8JLQ"/>
    </source>
</evidence>
<evidence type="ECO:0007744" key="21">
    <source>
        <dbReference type="PDB" id="8JLR"/>
    </source>
</evidence>
<evidence type="ECO:0007744" key="22">
    <source>
        <dbReference type="PDB" id="8JSO"/>
    </source>
</evidence>
<evidence type="ECO:0007744" key="23">
    <source>
        <dbReference type="PDB" id="8UHB"/>
    </source>
</evidence>
<evidence type="ECO:0007744" key="24">
    <source>
        <dbReference type="PDB" id="8W87"/>
    </source>
</evidence>
<evidence type="ECO:0007744" key="25">
    <source>
        <dbReference type="PDB" id="8W88"/>
    </source>
</evidence>
<evidence type="ECO:0007744" key="26">
    <source>
        <dbReference type="PDB" id="8W89"/>
    </source>
</evidence>
<evidence type="ECO:0007744" key="27">
    <source>
        <dbReference type="PDB" id="8W8A"/>
    </source>
</evidence>
<evidence type="ECO:0007744" key="28">
    <source>
        <dbReference type="PDB" id="8WC8"/>
    </source>
</evidence>
<evidence type="ECO:0007744" key="29">
    <source>
        <dbReference type="PDB" id="8WCA"/>
    </source>
</evidence>
<evidence type="ECO:0007829" key="30">
    <source>
        <dbReference type="PDB" id="8UHB"/>
    </source>
</evidence>
<evidence type="ECO:0007829" key="31">
    <source>
        <dbReference type="PDB" id="8W88"/>
    </source>
</evidence>
<evidence type="ECO:0007829" key="32">
    <source>
        <dbReference type="PDB" id="9JKQ"/>
    </source>
</evidence>
<keyword id="KW-0002">3D-structure</keyword>
<keyword id="KW-1003">Cell membrane</keyword>
<keyword id="KW-1015">Disulfide bond</keyword>
<keyword id="KW-0256">Endoplasmic reticulum</keyword>
<keyword id="KW-0297">G-protein coupled receptor</keyword>
<keyword id="KW-0325">Glycoprotein</keyword>
<keyword id="KW-0472">Membrane</keyword>
<keyword id="KW-0675">Receptor</keyword>
<keyword id="KW-1185">Reference proteome</keyword>
<keyword id="KW-0807">Transducer</keyword>
<keyword id="KW-0812">Transmembrane</keyword>
<keyword id="KW-1133">Transmembrane helix</keyword>
<organism>
    <name type="scientific">Homo sapiens</name>
    <name type="common">Human</name>
    <dbReference type="NCBI Taxonomy" id="9606"/>
    <lineage>
        <taxon>Eukaryota</taxon>
        <taxon>Metazoa</taxon>
        <taxon>Chordata</taxon>
        <taxon>Craniata</taxon>
        <taxon>Vertebrata</taxon>
        <taxon>Euteleostomi</taxon>
        <taxon>Mammalia</taxon>
        <taxon>Eutheria</taxon>
        <taxon>Euarchontoglires</taxon>
        <taxon>Primates</taxon>
        <taxon>Haplorrhini</taxon>
        <taxon>Catarrhini</taxon>
        <taxon>Hominidae</taxon>
        <taxon>Homo</taxon>
    </lineage>
</organism>
<dbReference type="EMBL" id="AF380185">
    <property type="protein sequence ID" value="AAK71236.1"/>
    <property type="molecule type" value="Genomic_DNA"/>
</dbReference>
<dbReference type="EMBL" id="AF200627">
    <property type="protein sequence ID" value="AAG17112.1"/>
    <property type="molecule type" value="Genomic_DNA"/>
</dbReference>
<dbReference type="EMBL" id="AY180374">
    <property type="protein sequence ID" value="AAO22154.1"/>
    <property type="molecule type" value="mRNA"/>
</dbReference>
<dbReference type="EMBL" id="AL513524">
    <property type="status" value="NOT_ANNOTATED_CDS"/>
    <property type="molecule type" value="Genomic_DNA"/>
</dbReference>
<dbReference type="EMBL" id="BC101825">
    <property type="protein sequence ID" value="AAI01826.1"/>
    <property type="molecule type" value="mRNA"/>
</dbReference>
<dbReference type="EMBL" id="BC112194">
    <property type="protein sequence ID" value="AAI12195.1"/>
    <property type="molecule type" value="mRNA"/>
</dbReference>
<dbReference type="CCDS" id="CCDS5158.1"/>
<dbReference type="RefSeq" id="NP_612200.1">
    <property type="nucleotide sequence ID" value="NM_138327.4"/>
</dbReference>
<dbReference type="PDB" id="8JLN">
    <property type="method" value="EM"/>
    <property type="resolution" value="3.24 A"/>
    <property type="chains" value="R=1-339"/>
</dbReference>
<dbReference type="PDB" id="8JLO">
    <property type="method" value="EM"/>
    <property type="resolution" value="3.52 A"/>
    <property type="chains" value="R=1-339"/>
</dbReference>
<dbReference type="PDB" id="8JLP">
    <property type="method" value="EM"/>
    <property type="resolution" value="3.23 A"/>
    <property type="chains" value="R=1-339"/>
</dbReference>
<dbReference type="PDB" id="8JLQ">
    <property type="method" value="EM"/>
    <property type="resolution" value="2.84 A"/>
    <property type="chains" value="R=1-339"/>
</dbReference>
<dbReference type="PDB" id="8JLR">
    <property type="method" value="EM"/>
    <property type="resolution" value="3.00 A"/>
    <property type="chains" value="R=1-339"/>
</dbReference>
<dbReference type="PDB" id="8JSO">
    <property type="method" value="EM"/>
    <property type="resolution" value="3.40 A"/>
    <property type="chains" value="R=1-339"/>
</dbReference>
<dbReference type="PDB" id="8UHB">
    <property type="method" value="EM"/>
    <property type="resolution" value="3.35 A"/>
    <property type="chains" value="A=1-339"/>
</dbReference>
<dbReference type="PDB" id="8W87">
    <property type="method" value="EM"/>
    <property type="resolution" value="2.80 A"/>
    <property type="chains" value="R=1-339"/>
</dbReference>
<dbReference type="PDB" id="8W88">
    <property type="method" value="EM"/>
    <property type="resolution" value="2.60 A"/>
    <property type="chains" value="R=1-339"/>
</dbReference>
<dbReference type="PDB" id="8W89">
    <property type="method" value="EM"/>
    <property type="resolution" value="3.00 A"/>
    <property type="chains" value="R=1-339"/>
</dbReference>
<dbReference type="PDB" id="8W8A">
    <property type="method" value="EM"/>
    <property type="resolution" value="2.80 A"/>
    <property type="chains" value="R=1-339"/>
</dbReference>
<dbReference type="PDB" id="8WC8">
    <property type="method" value="EM"/>
    <property type="resolution" value="2.90 A"/>
    <property type="chains" value="R=1-339"/>
</dbReference>
<dbReference type="PDB" id="8WCA">
    <property type="method" value="EM"/>
    <property type="resolution" value="3.48 A"/>
    <property type="chains" value="R=1-339"/>
</dbReference>
<dbReference type="PDB" id="8ZSJ">
    <property type="method" value="EM"/>
    <property type="resolution" value="2.80 A"/>
    <property type="chains" value="R=2-339"/>
</dbReference>
<dbReference type="PDB" id="8ZSP">
    <property type="method" value="EM"/>
    <property type="resolution" value="3.14 A"/>
    <property type="chains" value="R=2-339"/>
</dbReference>
<dbReference type="PDB" id="8ZSS">
    <property type="method" value="EM"/>
    <property type="resolution" value="3.07 A"/>
    <property type="chains" value="R=2-339"/>
</dbReference>
<dbReference type="PDB" id="9JKQ">
    <property type="method" value="EM"/>
    <property type="resolution" value="2.66 A"/>
    <property type="chains" value="R=1-339"/>
</dbReference>
<dbReference type="PDBsum" id="8JLN"/>
<dbReference type="PDBsum" id="8JLO"/>
<dbReference type="PDBsum" id="8JLP"/>
<dbReference type="PDBsum" id="8JLQ"/>
<dbReference type="PDBsum" id="8JLR"/>
<dbReference type="PDBsum" id="8JSO"/>
<dbReference type="PDBsum" id="8UHB"/>
<dbReference type="PDBsum" id="8W87"/>
<dbReference type="PDBsum" id="8W88"/>
<dbReference type="PDBsum" id="8W89"/>
<dbReference type="PDBsum" id="8W8A"/>
<dbReference type="PDBsum" id="8WC8"/>
<dbReference type="PDBsum" id="8WCA"/>
<dbReference type="PDBsum" id="8ZSJ"/>
<dbReference type="PDBsum" id="8ZSP"/>
<dbReference type="PDBsum" id="8ZSS"/>
<dbReference type="PDBsum" id="9JKQ"/>
<dbReference type="EMDB" id="EMD-36401"/>
<dbReference type="EMDB" id="EMD-36402"/>
<dbReference type="EMDB" id="EMD-36403"/>
<dbReference type="EMDB" id="EMD-36404"/>
<dbReference type="EMDB" id="EMD-36405"/>
<dbReference type="EMDB" id="EMD-36625"/>
<dbReference type="EMDB" id="EMD-37347"/>
<dbReference type="EMDB" id="EMD-37348"/>
<dbReference type="EMDB" id="EMD-37349"/>
<dbReference type="EMDB" id="EMD-37350"/>
<dbReference type="EMDB" id="EMD-37434"/>
<dbReference type="EMDB" id="EMD-37436"/>
<dbReference type="EMDB" id="EMD-42268"/>
<dbReference type="EMDB" id="EMD-60417"/>
<dbReference type="EMDB" id="EMD-60423"/>
<dbReference type="EMDB" id="EMD-60426"/>
<dbReference type="EMDB" id="EMD-61567"/>
<dbReference type="SMR" id="Q96RJ0"/>
<dbReference type="BioGRID" id="126416">
    <property type="interactions" value="6"/>
</dbReference>
<dbReference type="CORUM" id="Q96RJ0"/>
<dbReference type="FunCoup" id="Q96RJ0">
    <property type="interactions" value="645"/>
</dbReference>
<dbReference type="IntAct" id="Q96RJ0">
    <property type="interactions" value="4"/>
</dbReference>
<dbReference type="MINT" id="Q96RJ0"/>
<dbReference type="STRING" id="9606.ENSP00000275216"/>
<dbReference type="BindingDB" id="Q96RJ0"/>
<dbReference type="ChEMBL" id="CHEMBL5857"/>
<dbReference type="DrugBank" id="DB00182">
    <property type="generic name" value="Amphetamine"/>
</dbReference>
<dbReference type="DrugBank" id="DB01576">
    <property type="generic name" value="Dextroamphetamine"/>
</dbReference>
<dbReference type="DrugBank" id="DB09352">
    <property type="generic name" value="Hydroxyamphetamine"/>
</dbReference>
<dbReference type="DrugBank" id="DB01255">
    <property type="generic name" value="Lisdexamfetamine"/>
</dbReference>
<dbReference type="DrugBank" id="DB01577">
    <property type="generic name" value="Metamfetamine"/>
</dbReference>
<dbReference type="DrugBank" id="DB06714">
    <property type="generic name" value="Propylhexedrine"/>
</dbReference>
<dbReference type="DrugBank" id="DB15665">
    <property type="generic name" value="SEP-363856"/>
</dbReference>
<dbReference type="DrugBank" id="DB08841">
    <property type="generic name" value="Tyramine"/>
</dbReference>
<dbReference type="DrugCentral" id="Q96RJ0"/>
<dbReference type="GuidetoPHARMACOLOGY" id="364"/>
<dbReference type="GlyCosmos" id="Q96RJ0">
    <property type="glycosylation" value="2 sites, No reported glycans"/>
</dbReference>
<dbReference type="GlyGen" id="Q96RJ0">
    <property type="glycosylation" value="2 sites"/>
</dbReference>
<dbReference type="iPTMnet" id="Q96RJ0"/>
<dbReference type="PhosphoSitePlus" id="Q96RJ0"/>
<dbReference type="BioMuta" id="TAAR1"/>
<dbReference type="DMDM" id="38258636"/>
<dbReference type="MassIVE" id="Q96RJ0"/>
<dbReference type="PaxDb" id="9606-ENSP00000275216"/>
<dbReference type="ProteomicsDB" id="77969"/>
<dbReference type="Antibodypedia" id="19712">
    <property type="antibodies" value="180 antibodies from 27 providers"/>
</dbReference>
<dbReference type="DNASU" id="134864"/>
<dbReference type="Ensembl" id="ENST00000275216.3">
    <property type="protein sequence ID" value="ENSP00000275216.1"/>
    <property type="gene ID" value="ENSG00000146399.3"/>
</dbReference>
<dbReference type="GeneID" id="134864"/>
<dbReference type="KEGG" id="hsa:134864"/>
<dbReference type="MANE-Select" id="ENST00000275216.3">
    <property type="protein sequence ID" value="ENSP00000275216.1"/>
    <property type="RefSeq nucleotide sequence ID" value="NM_138327.4"/>
    <property type="RefSeq protein sequence ID" value="NP_612200.1"/>
</dbReference>
<dbReference type="UCSC" id="uc003qdm.1">
    <property type="organism name" value="human"/>
</dbReference>
<dbReference type="AGR" id="HGNC:17734"/>
<dbReference type="CTD" id="134864"/>
<dbReference type="DisGeNET" id="134864"/>
<dbReference type="GeneCards" id="TAAR1"/>
<dbReference type="HGNC" id="HGNC:17734">
    <property type="gene designation" value="TAAR1"/>
</dbReference>
<dbReference type="HPA" id="ENSG00000146399">
    <property type="expression patterns" value="Tissue enriched (stomach)"/>
</dbReference>
<dbReference type="MIM" id="609333">
    <property type="type" value="gene"/>
</dbReference>
<dbReference type="neXtProt" id="NX_Q96RJ0"/>
<dbReference type="OpenTargets" id="ENSG00000146399"/>
<dbReference type="PharmGKB" id="PA134921784"/>
<dbReference type="VEuPathDB" id="HostDB:ENSG00000146399"/>
<dbReference type="eggNOG" id="KOG3656">
    <property type="taxonomic scope" value="Eukaryota"/>
</dbReference>
<dbReference type="GeneTree" id="ENSGT00950000182934"/>
<dbReference type="HOGENOM" id="CLU_009579_11_0_1"/>
<dbReference type="InParanoid" id="Q96RJ0"/>
<dbReference type="OMA" id="MQLCCES"/>
<dbReference type="OrthoDB" id="5959645at2759"/>
<dbReference type="PAN-GO" id="Q96RJ0">
    <property type="GO annotations" value="1 GO annotation based on evolutionary models"/>
</dbReference>
<dbReference type="PhylomeDB" id="Q96RJ0"/>
<dbReference type="TreeFam" id="TF343107"/>
<dbReference type="PathwayCommons" id="Q96RJ0"/>
<dbReference type="Reactome" id="R-HSA-375280">
    <property type="pathway name" value="Amine ligand-binding receptors"/>
</dbReference>
<dbReference type="Reactome" id="R-HSA-418555">
    <property type="pathway name" value="G alpha (s) signalling events"/>
</dbReference>
<dbReference type="SignaLink" id="Q96RJ0"/>
<dbReference type="BioGRID-ORCS" id="134864">
    <property type="hits" value="34 hits in 1117 CRISPR screens"/>
</dbReference>
<dbReference type="GeneWiki" id="TAAR1"/>
<dbReference type="GenomeRNAi" id="134864"/>
<dbReference type="Pharos" id="Q96RJ0">
    <property type="development level" value="Tclin"/>
</dbReference>
<dbReference type="PRO" id="PR:Q96RJ0"/>
<dbReference type="Proteomes" id="UP000005640">
    <property type="component" value="Chromosome 6"/>
</dbReference>
<dbReference type="RNAct" id="Q96RJ0">
    <property type="molecule type" value="protein"/>
</dbReference>
<dbReference type="Bgee" id="ENSG00000146399">
    <property type="expression patterns" value="Expressed in islet of Langerhans and 17 other cell types or tissues"/>
</dbReference>
<dbReference type="GO" id="GO:0012505">
    <property type="term" value="C:endomembrane system"/>
    <property type="evidence" value="ECO:0000314"/>
    <property type="project" value="UniProtKB"/>
</dbReference>
<dbReference type="GO" id="GO:0005789">
    <property type="term" value="C:endoplasmic reticulum membrane"/>
    <property type="evidence" value="ECO:0007669"/>
    <property type="project" value="UniProtKB-SubCell"/>
</dbReference>
<dbReference type="GO" id="GO:0005886">
    <property type="term" value="C:plasma membrane"/>
    <property type="evidence" value="ECO:0000318"/>
    <property type="project" value="GO_Central"/>
</dbReference>
<dbReference type="GO" id="GO:0004930">
    <property type="term" value="F:G protein-coupled receptor activity"/>
    <property type="evidence" value="ECO:0000314"/>
    <property type="project" value="CACAO"/>
</dbReference>
<dbReference type="GO" id="GO:0001594">
    <property type="term" value="F:trace-amine receptor activity"/>
    <property type="evidence" value="ECO:0000314"/>
    <property type="project" value="UniProtKB"/>
</dbReference>
<dbReference type="GO" id="GO:0007189">
    <property type="term" value="P:adenylate cyclase-activating G protein-coupled receptor signaling pathway"/>
    <property type="evidence" value="ECO:0000314"/>
    <property type="project" value="UniProtKB"/>
</dbReference>
<dbReference type="GO" id="GO:0007193">
    <property type="term" value="P:adenylate cyclase-inhibiting G protein-coupled receptor signaling pathway"/>
    <property type="evidence" value="ECO:0000314"/>
    <property type="project" value="UniProtKB"/>
</dbReference>
<dbReference type="GO" id="GO:0007186">
    <property type="term" value="P:G protein-coupled receptor signaling pathway"/>
    <property type="evidence" value="ECO:0000314"/>
    <property type="project" value="UniProtKB"/>
</dbReference>
<dbReference type="GO" id="GO:0007200">
    <property type="term" value="P:phospholipase C-activating G protein-coupled receptor signaling pathway"/>
    <property type="evidence" value="ECO:0000314"/>
    <property type="project" value="UniProtKB"/>
</dbReference>
<dbReference type="CDD" id="cd15314">
    <property type="entry name" value="7tmA_TAAR1"/>
    <property type="match status" value="1"/>
</dbReference>
<dbReference type="FunFam" id="1.20.1070.10:FF:000030">
    <property type="entry name" value="trace amine-associated receptor 1"/>
    <property type="match status" value="1"/>
</dbReference>
<dbReference type="Gene3D" id="1.20.1070.10">
    <property type="entry name" value="Rhodopsin 7-helix transmembrane proteins"/>
    <property type="match status" value="1"/>
</dbReference>
<dbReference type="InterPro" id="IPR000276">
    <property type="entry name" value="GPCR_Rhodpsn"/>
</dbReference>
<dbReference type="InterPro" id="IPR017452">
    <property type="entry name" value="GPCR_Rhodpsn_7TM"/>
</dbReference>
<dbReference type="InterPro" id="IPR050569">
    <property type="entry name" value="TAAR"/>
</dbReference>
<dbReference type="InterPro" id="IPR009133">
    <property type="entry name" value="TAAR1"/>
</dbReference>
<dbReference type="InterPro" id="IPR009132">
    <property type="entry name" value="TAAR_fam"/>
</dbReference>
<dbReference type="PANTHER" id="PTHR24249">
    <property type="entry name" value="HISTAMINE RECEPTOR-RELATED G-PROTEIN COUPLED RECEPTOR"/>
    <property type="match status" value="1"/>
</dbReference>
<dbReference type="PANTHER" id="PTHR24249:SF415">
    <property type="entry name" value="TRACE AMINE-ASSOCIATED RECEPTOR 1"/>
    <property type="match status" value="1"/>
</dbReference>
<dbReference type="Pfam" id="PF00001">
    <property type="entry name" value="7tm_1"/>
    <property type="match status" value="1"/>
</dbReference>
<dbReference type="PRINTS" id="PR00237">
    <property type="entry name" value="GPCRRHODOPSN"/>
</dbReference>
<dbReference type="PRINTS" id="PR01831">
    <property type="entry name" value="TRACEAMINE1R"/>
</dbReference>
<dbReference type="PRINTS" id="PR01830">
    <property type="entry name" value="TRACEAMINER"/>
</dbReference>
<dbReference type="SMART" id="SM01381">
    <property type="entry name" value="7TM_GPCR_Srsx"/>
    <property type="match status" value="1"/>
</dbReference>
<dbReference type="SUPFAM" id="SSF81321">
    <property type="entry name" value="Family A G protein-coupled receptor-like"/>
    <property type="match status" value="1"/>
</dbReference>
<dbReference type="PROSITE" id="PS00237">
    <property type="entry name" value="G_PROTEIN_RECEP_F1_1"/>
    <property type="match status" value="1"/>
</dbReference>
<dbReference type="PROSITE" id="PS50262">
    <property type="entry name" value="G_PROTEIN_RECEP_F1_2"/>
    <property type="match status" value="1"/>
</dbReference>
<feature type="chain" id="PRO_0000070141" description="Trace amine-associated receptor 1">
    <location>
        <begin position="1"/>
        <end position="339"/>
    </location>
</feature>
<feature type="topological domain" description="Extracellular" evidence="8 9 10">
    <location>
        <begin position="1"/>
        <end position="24"/>
    </location>
</feature>
<feature type="transmembrane region" description="Helical; Name=1" evidence="8 9 10">
    <location>
        <begin position="25"/>
        <end position="49"/>
    </location>
</feature>
<feature type="topological domain" description="Cytoplasmic" evidence="8 9 10">
    <location>
        <begin position="50"/>
        <end position="59"/>
    </location>
</feature>
<feature type="transmembrane region" description="Helical; Name=2" evidence="8 9 10">
    <location>
        <begin position="60"/>
        <end position="81"/>
    </location>
</feature>
<feature type="topological domain" description="Extracellular" evidence="8 9 10">
    <location>
        <begin position="82"/>
        <end position="96"/>
    </location>
</feature>
<feature type="transmembrane region" description="Helical; Name=3" evidence="8 9 10">
    <location>
        <begin position="97"/>
        <end position="119"/>
    </location>
</feature>
<feature type="topological domain" description="Cytoplasmic" evidence="8 9 10">
    <location>
        <begin position="120"/>
        <end position="139"/>
    </location>
</feature>
<feature type="transmembrane region" description="Helical; Name=4" evidence="8 9 10">
    <location>
        <begin position="140"/>
        <end position="161"/>
    </location>
</feature>
<feature type="topological domain" description="Extracellular" evidence="8 9 10">
    <location>
        <begin position="162"/>
        <end position="188"/>
    </location>
</feature>
<feature type="transmembrane region" description="Helical; Name=5" evidence="8 9 10">
    <location>
        <begin position="189"/>
        <end position="211"/>
    </location>
</feature>
<feature type="topological domain" description="Cytoplasmic" evidence="8 9 10">
    <location>
        <begin position="212"/>
        <end position="249"/>
    </location>
</feature>
<feature type="transmembrane region" description="Helical; Name=6" evidence="8 9 10">
    <location>
        <begin position="250"/>
        <end position="273"/>
    </location>
</feature>
<feature type="topological domain" description="Extracellular" evidence="8 9 10">
    <location>
        <begin position="274"/>
        <end position="286"/>
    </location>
</feature>
<feature type="transmembrane region" description="Helical; Name=7" evidence="8 9 10">
    <location>
        <begin position="287"/>
        <end position="307"/>
    </location>
</feature>
<feature type="topological domain" description="Cytoplasmic" evidence="8 9 10">
    <location>
        <begin position="308"/>
        <end position="339"/>
    </location>
</feature>
<feature type="region of interest" description="Extracellular Loop 2 (ECL2)" evidence="8 9 10">
    <location>
        <begin position="175"/>
        <end position="186"/>
    </location>
</feature>
<feature type="binding site" evidence="8 9 10 26 29">
    <location>
        <position position="103"/>
    </location>
    <ligand>
        <name>2-phenylethylamine</name>
        <dbReference type="ChEBI" id="CHEBI:225237"/>
    </ligand>
</feature>
<feature type="glycosylation site" description="N-linked (GlcNAc...) asparagine" evidence="1">
    <location>
        <position position="10"/>
    </location>
</feature>
<feature type="glycosylation site" description="N-linked (GlcNAc...) asparagine" evidence="1">
    <location>
        <position position="17"/>
    </location>
</feature>
<feature type="disulfide bond" evidence="11 23">
    <location>
        <begin position="5"/>
        <end position="178"/>
    </location>
</feature>
<feature type="disulfide bond" evidence="11 23">
    <location>
        <begin position="13"/>
        <end position="88"/>
    </location>
</feature>
<feature type="disulfide bond" evidence="2 8 9 10 11 17 18 19 20 21 22 23 24 25 26 27 28">
    <location>
        <begin position="96"/>
        <end position="182"/>
    </location>
</feature>
<feature type="sequence variant" id="VAR_049445" description="In dbSNP:rs8192618.">
    <original>R</original>
    <variation>C</variation>
    <location>
        <position position="23"/>
    </location>
</feature>
<feature type="sequence variant" id="VAR_049446" description="Reduced activation of G(i) G alpha proteins in response to agonist-binding; dbSNP:rs6926857." evidence="8">
    <original>T</original>
    <variation>A</variation>
    <location>
        <position position="252"/>
    </location>
</feature>
<feature type="mutagenesis site" description="Reduced activation of G(s) G alpha proteins in response to agonist-binding." evidence="8">
    <original>H</original>
    <variation>A</variation>
    <location>
        <position position="55"/>
    </location>
</feature>
<feature type="mutagenesis site" description="Reduced activation of G(i) G alpha proteins in response to agonist-binding. Does not affect activation of G(s) G alpha proteins in response to agonist-binding." evidence="8">
    <original>R</original>
    <variation>A</variation>
    <location>
        <position position="83"/>
    </location>
</feature>
<feature type="mutagenesis site" description="Abolished activation of G alpha proteins in response to agonist-binding." evidence="11">
    <original>R</original>
    <variation>H</variation>
    <location>
        <position position="83"/>
    </location>
</feature>
<feature type="mutagenesis site" description="Slightly affects G-protein coupled receptor activity." evidence="11">
    <original>C</original>
    <variation>S</variation>
    <location>
        <position position="88"/>
    </location>
</feature>
<feature type="mutagenesis site" description="Abolished G-protein coupled receptor activity." evidence="11">
    <original>C</original>
    <variation>S</variation>
    <location>
        <position position="96"/>
    </location>
</feature>
<feature type="mutagenesis site" description="Abolished activation of G(s) G alpha proteins in response to agonist-binding." evidence="8 9 11">
    <original>D</original>
    <variation>A</variation>
    <variation>N</variation>
    <location>
        <position position="103"/>
    </location>
</feature>
<feature type="mutagenesis site" description="Reduced activation of G alpha proteins in response to agonist-binding." evidence="9">
    <original>I</original>
    <variation>A</variation>
    <location>
        <position position="104"/>
    </location>
</feature>
<feature type="mutagenesis site" description="Abolished activation of G(s) G alpha proteins in response to agonist-binding. Does not affect activation of G(i) or G(q) G alpha proteins in response to agonist-binding." evidence="8 9 11">
    <original>S</original>
    <variation>A</variation>
    <location>
        <position position="107"/>
    </location>
</feature>
<feature type="mutagenesis site" description="Reduced activation of G(i) G alpha proteins in response to agonist-binding." evidence="8">
    <original>L</original>
    <variation>A</variation>
    <location>
        <position position="114"/>
    </location>
</feature>
<feature type="mutagenesis site" description="Abolished activation of G alpha proteins in response to agonist-binding." evidence="8">
    <original>F</original>
    <variation>A</variation>
    <location>
        <position position="154"/>
    </location>
</feature>
<feature type="mutagenesis site" description="Slightly affects G-protein coupled receptor activity." evidence="11">
    <original>C</original>
    <variation>S</variation>
    <location>
        <position position="178"/>
    </location>
</feature>
<feature type="mutagenesis site" description="Reduced activation of G(i) G alpha proteins in response to agonist-binding. Does not affect activation of G(s) G alpha proteins in response to agonist-binding." evidence="8">
    <original>S</original>
    <variation>A</variation>
    <location>
        <position position="183"/>
    </location>
</feature>
<feature type="mutagenesis site" description="Abolished activation of G alpha proteins in response to agonist-binding." evidence="8">
    <original>V</original>
    <variation>A</variation>
    <location>
        <position position="184"/>
    </location>
</feature>
<feature type="mutagenesis site" description="Decreased G-protein coupled receptor activity in response to p-tyramine-binding." evidence="11">
    <original>V</original>
    <variation>P</variation>
    <location>
        <position position="184"/>
    </location>
</feature>
<feature type="mutagenesis site" description="Abolished activation of G alpha proteins in response to agonist-binding." evidence="8">
    <original>F</original>
    <variation>A</variation>
    <location>
        <position position="185"/>
    </location>
</feature>
<feature type="mutagenesis site" description="Reduced activation of G(q) G alpha proteins in response to agonist-binding. Does not affect activation of G(s) G alpha proteins in response to agonist-binding." evidence="8 9">
    <original>F</original>
    <variation>A</variation>
    <location>
        <position position="186"/>
    </location>
</feature>
<feature type="mutagenesis site" description="Abolished activation of G alpha proteins in response to agonist-binding." evidence="8 9">
    <original>T</original>
    <variation>A</variation>
    <location>
        <position position="194"/>
    </location>
</feature>
<feature type="mutagenesis site" description="Increased G-protein coupled receptor activity in response to p-tyramine-binding." evidence="11">
    <original>F</original>
    <variation>T</variation>
    <location>
        <position position="195"/>
    </location>
</feature>
<feature type="mutagenesis site" description="Reduced activation of G(s) G alpha proteins in response to agonist-binding." evidence="8">
    <original>Q</original>
    <variation>A</variation>
    <location>
        <position position="220"/>
    </location>
</feature>
<feature type="mutagenesis site" description="Reduced activation of G(s) G alpha proteins in response to agonist-binding." evidence="8">
    <original>I</original>
    <variation>A</variation>
    <location>
        <position position="224"/>
    </location>
</feature>
<feature type="mutagenesis site" description="Reduced activation of G(i) G alpha proteins in response to agonist-binding." evidence="8">
    <original>L</original>
    <variation>A</variation>
    <location>
        <position position="253"/>
    </location>
</feature>
<feature type="mutagenesis site" description="Reduced activation of G(s) G alpha proteins in response to agonist-binding." evidence="8">
    <original>F</original>
    <variation>A</variation>
    <location>
        <position position="260"/>
    </location>
</feature>
<feature type="mutagenesis site" description="Abolished activation of G alpha proteins in response to 3-iodothyronamine-binding." evidence="8 9">
    <original>W</original>
    <variation>A</variation>
    <location>
        <position position="264"/>
    </location>
</feature>
<feature type="mutagenesis site" description="Abolished activation of G alpha proteins in response to agonist-binding." evidence="11">
    <original>W</original>
    <variation>F</variation>
    <location>
        <position position="264"/>
    </location>
</feature>
<feature type="mutagenesis site" description="Abolished activation of G alpha proteins in response to 3-iodothyronamine-binding. Reduced activation of G(q) G alpha proteins in response to agonist-binding. Does not affect activation of G(s) G alpha proteins in response to agonist-binding." evidence="8 9">
    <original>F</original>
    <variation>A</variation>
    <location>
        <position position="267"/>
    </location>
</feature>
<feature type="mutagenesis site" description="Abolished activation of G alpha proteins in response to 3-iodothyronamine-binding." evidence="8 9">
    <original>F</original>
    <variation>A</variation>
    <location>
        <position position="268"/>
    </location>
</feature>
<feature type="mutagenesis site" description="Decreased G-protein coupled receptor activity in response to p-tyramine-binding." evidence="11">
    <original>T</original>
    <variation>A</variation>
    <variation>N</variation>
    <location>
        <position position="271"/>
    </location>
</feature>
<feature type="mutagenesis site" description="Reduced activation of G(i) G alpha proteins in response to agonist-binding. Does not affect activation of G(s) G alpha proteins in response to agonist-binding." evidence="8">
    <original>I</original>
    <variation>A</variation>
    <location>
        <position position="290"/>
    </location>
</feature>
<feature type="mutagenesis site" description="Increased G-protein coupled receptor activity in response to Ro5256390 agonist-binding. Decreased G-protein coupled receptor activity in response to p-tyramine-binding." evidence="11">
    <original>I</original>
    <variation>N</variation>
    <location>
        <position position="290"/>
    </location>
</feature>
<feature type="mutagenesis site" description="Abolished activation of G(s) G alpha proteins in response to agonist-binding." evidence="8">
    <original>F</original>
    <variation>A</variation>
    <location>
        <position position="292"/>
    </location>
</feature>
<feature type="mutagenesis site" description="Reduced activation of G(s) G alpha proteins in response to agonist-binding. Does not affect activation of G(i) or G(q) G alpha proteins in response to agonist-binding." evidence="8 9">
    <original>Y</original>
    <variation>A</variation>
    <location>
        <position position="294"/>
    </location>
</feature>
<feature type="mutagenesis site" description="Reduced activation of G(s) G alpha proteins in response to agonist-binding." evidence="8">
    <original>Y</original>
    <variation>A</variation>
    <location>
        <position position="304"/>
    </location>
</feature>
<feature type="mutagenesis site" description="Reduced activation of G(i) G alpha proteins in response to agonist-binding." evidence="8">
    <original>F</original>
    <variation>A</variation>
    <location>
        <position position="307"/>
    </location>
</feature>
<feature type="helix" evidence="31">
    <location>
        <begin position="20"/>
        <end position="50"/>
    </location>
</feature>
<feature type="helix" evidence="31">
    <location>
        <begin position="52"/>
        <end position="54"/>
    </location>
</feature>
<feature type="helix" evidence="31">
    <location>
        <begin position="57"/>
        <end position="75"/>
    </location>
</feature>
<feature type="helix" evidence="31">
    <location>
        <begin position="77"/>
        <end position="85"/>
    </location>
</feature>
<feature type="strand" evidence="31">
    <location>
        <begin position="86"/>
        <end position="88"/>
    </location>
</feature>
<feature type="helix" evidence="31">
    <location>
        <begin position="93"/>
        <end position="126"/>
    </location>
</feature>
<feature type="helix" evidence="31">
    <location>
        <begin position="128"/>
        <end position="130"/>
    </location>
</feature>
<feature type="helix" evidence="31">
    <location>
        <begin position="131"/>
        <end position="134"/>
    </location>
</feature>
<feature type="helix" evidence="31">
    <location>
        <begin position="137"/>
        <end position="159"/>
    </location>
</feature>
<feature type="turn" evidence="32">
    <location>
        <begin position="160"/>
        <end position="162"/>
    </location>
</feature>
<feature type="turn" evidence="31">
    <location>
        <begin position="164"/>
        <end position="167"/>
    </location>
</feature>
<feature type="helix" evidence="31">
    <location>
        <begin position="169"/>
        <end position="178"/>
    </location>
</feature>
<feature type="strand" evidence="32">
    <location>
        <begin position="179"/>
        <end position="181"/>
    </location>
</feature>
<feature type="helix" evidence="31">
    <location>
        <begin position="188"/>
        <end position="198"/>
    </location>
</feature>
<feature type="helix" evidence="31">
    <location>
        <begin position="200"/>
        <end position="228"/>
    </location>
</feature>
<feature type="helix" evidence="31">
    <location>
        <begin position="248"/>
        <end position="276"/>
    </location>
</feature>
<feature type="turn" evidence="31">
    <location>
        <begin position="277"/>
        <end position="279"/>
    </location>
</feature>
<feature type="helix" evidence="31">
    <location>
        <begin position="283"/>
        <end position="304"/>
    </location>
</feature>
<feature type="turn" evidence="31">
    <location>
        <begin position="305"/>
        <end position="307"/>
    </location>
</feature>
<feature type="helix" evidence="31">
    <location>
        <begin position="309"/>
        <end position="315"/>
    </location>
</feature>
<feature type="turn" evidence="30">
    <location>
        <begin position="320"/>
        <end position="322"/>
    </location>
</feature>
<feature type="helix" evidence="30">
    <location>
        <begin position="328"/>
        <end position="330"/>
    </location>
</feature>
<reference key="1">
    <citation type="journal article" date="2001" name="Proc. Natl. Acad. Sci. U.S.A.">
        <title>Trace amines: identification of a family of mammalian G protein-coupled receptors.</title>
        <authorList>
            <person name="Borowsky B."/>
            <person name="Adham N."/>
            <person name="Jones K.A."/>
            <person name="Raddatz R."/>
            <person name="Artymyshyn R."/>
            <person name="Ogozalek K.L."/>
            <person name="Durkin M.M."/>
            <person name="Lakhlani P.P."/>
            <person name="Bonini J.A."/>
            <person name="Pathirana S."/>
            <person name="Boyle N."/>
            <person name="Pu X."/>
            <person name="Kouranova E."/>
            <person name="Lichtblau H."/>
            <person name="Ochoa F.Y."/>
            <person name="Branchek T.A."/>
            <person name="Gerald C."/>
        </authorList>
    </citation>
    <scope>NUCLEOTIDE SEQUENCE [GENOMIC DNA]</scope>
    <scope>FUNCTION</scope>
    <scope>TISSUE SPECIFICITY</scope>
</reference>
<reference key="2">
    <citation type="journal article" date="2001" name="Mol. Pharmacol.">
        <title>Amphetamine, 3,4-methylenedioxymethamphetamine, lysergic acid diethylamide, and metabolites of the catecholamine neurotransmitters are agonists of a rat trace amine receptor.</title>
        <authorList>
            <person name="Bunzow J.R."/>
            <person name="Sonders M.S."/>
            <person name="Arttamangkul S."/>
            <person name="Harrison L.M."/>
            <person name="Zhang G."/>
            <person name="Quigley D.I."/>
            <person name="Darland T."/>
            <person name="Suchland K.L."/>
            <person name="Pasumamula S."/>
            <person name="Kennedy J.L."/>
            <person name="Olson S.B."/>
            <person name="Magenis R.E."/>
            <person name="Amara S.G."/>
            <person name="Grandy D.K."/>
        </authorList>
    </citation>
    <scope>NUCLEOTIDE SEQUENCE [GENOMIC DNA]</scope>
    <scope>FUNCTION</scope>
    <scope>SUBCELLULAR LOCATION</scope>
</reference>
<reference key="3">
    <citation type="submission" date="2002-11" db="EMBL/GenBank/DDBJ databases">
        <title>cDNA clones of human proteins involved in signal transduction sequenced by the Guthrie cDNA resource center (www.cdna.org).</title>
        <authorList>
            <person name="Kopatz S.A."/>
            <person name="Aronstam R.S."/>
            <person name="Sharma S.V."/>
        </authorList>
    </citation>
    <scope>NUCLEOTIDE SEQUENCE [LARGE SCALE MRNA]</scope>
</reference>
<reference key="4">
    <citation type="journal article" date="2003" name="Nature">
        <title>The DNA sequence and analysis of human chromosome 6.</title>
        <authorList>
            <person name="Mungall A.J."/>
            <person name="Palmer S.A."/>
            <person name="Sims S.K."/>
            <person name="Edwards C.A."/>
            <person name="Ashurst J.L."/>
            <person name="Wilming L."/>
            <person name="Jones M.C."/>
            <person name="Horton R."/>
            <person name="Hunt S.E."/>
            <person name="Scott C.E."/>
            <person name="Gilbert J.G.R."/>
            <person name="Clamp M.E."/>
            <person name="Bethel G."/>
            <person name="Milne S."/>
            <person name="Ainscough R."/>
            <person name="Almeida J.P."/>
            <person name="Ambrose K.D."/>
            <person name="Andrews T.D."/>
            <person name="Ashwell R.I.S."/>
            <person name="Babbage A.K."/>
            <person name="Bagguley C.L."/>
            <person name="Bailey J."/>
            <person name="Banerjee R."/>
            <person name="Barker D.J."/>
            <person name="Barlow K.F."/>
            <person name="Bates K."/>
            <person name="Beare D.M."/>
            <person name="Beasley H."/>
            <person name="Beasley O."/>
            <person name="Bird C.P."/>
            <person name="Blakey S.E."/>
            <person name="Bray-Allen S."/>
            <person name="Brook J."/>
            <person name="Brown A.J."/>
            <person name="Brown J.Y."/>
            <person name="Burford D.C."/>
            <person name="Burrill W."/>
            <person name="Burton J."/>
            <person name="Carder C."/>
            <person name="Carter N.P."/>
            <person name="Chapman J.C."/>
            <person name="Clark S.Y."/>
            <person name="Clark G."/>
            <person name="Clee C.M."/>
            <person name="Clegg S."/>
            <person name="Cobley V."/>
            <person name="Collier R.E."/>
            <person name="Collins J.E."/>
            <person name="Colman L.K."/>
            <person name="Corby N.R."/>
            <person name="Coville G.J."/>
            <person name="Culley K.M."/>
            <person name="Dhami P."/>
            <person name="Davies J."/>
            <person name="Dunn M."/>
            <person name="Earthrowl M.E."/>
            <person name="Ellington A.E."/>
            <person name="Evans K.A."/>
            <person name="Faulkner L."/>
            <person name="Francis M.D."/>
            <person name="Frankish A."/>
            <person name="Frankland J."/>
            <person name="French L."/>
            <person name="Garner P."/>
            <person name="Garnett J."/>
            <person name="Ghori M.J."/>
            <person name="Gilby L.M."/>
            <person name="Gillson C.J."/>
            <person name="Glithero R.J."/>
            <person name="Grafham D.V."/>
            <person name="Grant M."/>
            <person name="Gribble S."/>
            <person name="Griffiths C."/>
            <person name="Griffiths M.N.D."/>
            <person name="Hall R."/>
            <person name="Halls K.S."/>
            <person name="Hammond S."/>
            <person name="Harley J.L."/>
            <person name="Hart E.A."/>
            <person name="Heath P.D."/>
            <person name="Heathcott R."/>
            <person name="Holmes S.J."/>
            <person name="Howden P.J."/>
            <person name="Howe K.L."/>
            <person name="Howell G.R."/>
            <person name="Huckle E."/>
            <person name="Humphray S.J."/>
            <person name="Humphries M.D."/>
            <person name="Hunt A.R."/>
            <person name="Johnson C.M."/>
            <person name="Joy A.A."/>
            <person name="Kay M."/>
            <person name="Keenan S.J."/>
            <person name="Kimberley A.M."/>
            <person name="King A."/>
            <person name="Laird G.K."/>
            <person name="Langford C."/>
            <person name="Lawlor S."/>
            <person name="Leongamornlert D.A."/>
            <person name="Leversha M."/>
            <person name="Lloyd C.R."/>
            <person name="Lloyd D.M."/>
            <person name="Loveland J.E."/>
            <person name="Lovell J."/>
            <person name="Martin S."/>
            <person name="Mashreghi-Mohammadi M."/>
            <person name="Maslen G.L."/>
            <person name="Matthews L."/>
            <person name="McCann O.T."/>
            <person name="McLaren S.J."/>
            <person name="McLay K."/>
            <person name="McMurray A."/>
            <person name="Moore M.J.F."/>
            <person name="Mullikin J.C."/>
            <person name="Niblett D."/>
            <person name="Nickerson T."/>
            <person name="Novik K.L."/>
            <person name="Oliver K."/>
            <person name="Overton-Larty E.K."/>
            <person name="Parker A."/>
            <person name="Patel R."/>
            <person name="Pearce A.V."/>
            <person name="Peck A.I."/>
            <person name="Phillimore B.J.C.T."/>
            <person name="Phillips S."/>
            <person name="Plumb R.W."/>
            <person name="Porter K.M."/>
            <person name="Ramsey Y."/>
            <person name="Ranby S.A."/>
            <person name="Rice C.M."/>
            <person name="Ross M.T."/>
            <person name="Searle S.M."/>
            <person name="Sehra H.K."/>
            <person name="Sheridan E."/>
            <person name="Skuce C.D."/>
            <person name="Smith S."/>
            <person name="Smith M."/>
            <person name="Spraggon L."/>
            <person name="Squares S.L."/>
            <person name="Steward C.A."/>
            <person name="Sycamore N."/>
            <person name="Tamlyn-Hall G."/>
            <person name="Tester J."/>
            <person name="Theaker A.J."/>
            <person name="Thomas D.W."/>
            <person name="Thorpe A."/>
            <person name="Tracey A."/>
            <person name="Tromans A."/>
            <person name="Tubby B."/>
            <person name="Wall M."/>
            <person name="Wallis J.M."/>
            <person name="West A.P."/>
            <person name="White S.S."/>
            <person name="Whitehead S.L."/>
            <person name="Whittaker H."/>
            <person name="Wild A."/>
            <person name="Willey D.J."/>
            <person name="Wilmer T.E."/>
            <person name="Wood J.M."/>
            <person name="Wray P.W."/>
            <person name="Wyatt J.C."/>
            <person name="Young L."/>
            <person name="Younger R.M."/>
            <person name="Bentley D.R."/>
            <person name="Coulson A."/>
            <person name="Durbin R.M."/>
            <person name="Hubbard T."/>
            <person name="Sulston J.E."/>
            <person name="Dunham I."/>
            <person name="Rogers J."/>
            <person name="Beck S."/>
        </authorList>
    </citation>
    <scope>NUCLEOTIDE SEQUENCE [LARGE SCALE GENOMIC DNA]</scope>
</reference>
<reference key="5">
    <citation type="journal article" date="2004" name="Genome Res.">
        <title>The status, quality, and expansion of the NIH full-length cDNA project: the Mammalian Gene Collection (MGC).</title>
        <authorList>
            <consortium name="The MGC Project Team"/>
        </authorList>
    </citation>
    <scope>NUCLEOTIDE SEQUENCE [LARGE SCALE MRNA]</scope>
    <source>
        <tissue>Lung</tissue>
        <tissue>Placenta</tissue>
    </source>
</reference>
<reference key="6">
    <citation type="journal article" date="2005" name="Genomics">
        <title>Trace amine-associated receptors form structurally and functionally distinct subfamilies of novel G protein-coupled receptors.</title>
        <authorList>
            <person name="Lindemann L."/>
            <person name="Ebeling M."/>
            <person name="Kratochwil N.A."/>
            <person name="Bunzow J.R."/>
            <person name="Grandy D.K."/>
            <person name="Hoener M.C."/>
        </authorList>
    </citation>
    <scope>FUNCTION</scope>
</reference>
<reference key="7">
    <citation type="journal article" date="2021" name="Mol. Psychiatry">
        <title>Amphetamines signal through intracellular TAAR1 receptors coupled to Galpha13 and GalphaS in discrete subcellular domains.</title>
        <authorList>
            <person name="Underhill S.M."/>
            <person name="Hullihen P.D."/>
            <person name="Chen J."/>
            <person name="Fenollar-Ferrer C."/>
            <person name="Rizzo M.A."/>
            <person name="Ingram S.L."/>
            <person name="Amara S.G."/>
        </authorList>
    </citation>
    <scope>FUNCTION</scope>
</reference>
<reference key="8">
    <citation type="journal article" date="2022" name="Neuropsychopharmacology">
        <title>TAAR1 dependent and independent actions of the potential antipsychotic and dual TAAR1/5-HT1A receptor agonist SEP-383856.</title>
        <authorList>
            <person name="Saarinen M."/>
            <person name="Mantas I."/>
            <person name="Flais I."/>
            <person name="Aagren R."/>
            <person name="Sahlholm K."/>
            <person name="Millan M.J."/>
            <person name="Svenningsson P."/>
        </authorList>
    </citation>
    <scope>FUNCTION</scope>
    <scope>ACTIVITY REGULATION</scope>
    <scope>SUBCELLULAR LOCATION</scope>
</reference>
<reference evidence="28 29" key="9">
    <citation type="journal article" date="2023" name="Cell">
        <title>Structural and signaling mechanisms of TAAR1 enabled preferential agonist design.</title>
        <authorList>
            <person name="Shang P."/>
            <person name="Rong N."/>
            <person name="Jiang J.J."/>
            <person name="Cheng J."/>
            <person name="Zhang M.H."/>
            <person name="Kang D."/>
            <person name="Qi L."/>
            <person name="Guo L."/>
            <person name="Yang G.M."/>
            <person name="Liu Q."/>
            <person name="Zhou Z."/>
            <person name="Li X.B."/>
            <person name="Zhu K.K."/>
            <person name="Meng Q.B."/>
            <person name="Han X."/>
            <person name="Yan W."/>
            <person name="Kong Y."/>
            <person name="Yang L."/>
            <person name="Wang X."/>
            <person name="Lei D."/>
            <person name="Feng X."/>
            <person name="Liu X."/>
            <person name="Yu X."/>
            <person name="Wang Y."/>
            <person name="Li Q."/>
            <person name="Shao Z.H."/>
            <person name="Yang F."/>
            <person name="Sun J.P."/>
        </authorList>
    </citation>
    <scope>STRUCTURE BY ELECTRON MICROSCOPY (2.9 ANGSTROMS) IN COMPLEX WITH BETA-PHENYLETHYLAMINE; CYCLOHEXYLAMINE; GNAI1; GNB1 AND GNG2</scope>
    <scope>DISULFIDE BOND</scope>
    <scope>FUNCTION</scope>
</reference>
<reference evidence="24 25 26 27" key="10">
    <citation type="journal article" date="2023" name="Nature">
        <title>Recognition of methamphetamine and other amines by trace amine receptor TAAR1.</title>
        <authorList>
            <person name="Liu H."/>
            <person name="Zheng Y."/>
            <person name="Wang Y."/>
            <person name="Wang Y."/>
            <person name="He X."/>
            <person name="Xu P."/>
            <person name="Huang S."/>
            <person name="Yuan Q."/>
            <person name="Zhang X."/>
            <person name="Wang L."/>
            <person name="Jiang K."/>
            <person name="Chen H."/>
            <person name="Li Z."/>
            <person name="Liu W."/>
            <person name="Wang S."/>
            <person name="Xu H.E."/>
            <person name="Xu F."/>
        </authorList>
    </citation>
    <scope>STRUCTURE BY ELECTRON MICROSCOPY (2.6 ANGSTROMS) IN COMPLEX WITH BETA-PHENYLETHYLAMINE; GNB1; GNG2 AND GNAS</scope>
    <scope>DISULFIDE BOND</scope>
    <scope>FUNCTION</scope>
    <scope>MUTAGENESIS OF ASP-103; ILE-104; SER-107; PHE-186; THR-194; TRP-264; PHE-267; PHE-268 AND TYR-294</scope>
</reference>
<reference evidence="17 18 19 20 21 22" key="11">
    <citation type="journal article" date="2023" name="Nature">
        <title>Ligand recognition and G-protein coupling of trace amine receptor TAAR1.</title>
        <authorList>
            <person name="Xu Z."/>
            <person name="Guo L."/>
            <person name="Yu J."/>
            <person name="Shen S."/>
            <person name="Wu C."/>
            <person name="Zhang W."/>
            <person name="Zhao C."/>
            <person name="Deng Y."/>
            <person name="Tian X."/>
            <person name="Feng Y."/>
            <person name="Hou H."/>
            <person name="Su L."/>
            <person name="Wang H."/>
            <person name="Guo S."/>
            <person name="Wang H."/>
            <person name="Wang K."/>
            <person name="Chen P."/>
            <person name="Zhao J."/>
            <person name="Zhang X."/>
            <person name="Yong X."/>
            <person name="Cheng L."/>
            <person name="Liu L."/>
            <person name="Yang S."/>
            <person name="Yang F."/>
            <person name="Wang X."/>
            <person name="Yu X."/>
            <person name="Xu Y."/>
            <person name="Sun J.P."/>
            <person name="Yan W."/>
            <person name="Shao Z."/>
        </authorList>
    </citation>
    <scope>STRUCTURE BY ELECTRON MICROSCOPY (2.84 ANGSTROMS) IN COMPLEX WITH BETA-PHENYLETHYLAMINE; GNAI1; GNAS; GNB1 AND GNG2</scope>
    <scope>DISULFIDE BOND</scope>
    <scope>FUNCTION</scope>
    <scope>ACTIVITY REGULATION</scope>
    <scope>MUTAGENESIS OF HIS-55; ARG-83; ASP-103; SER-107; LEU-114; PHE-154; SER-183; VAL-184; PHE-185; PHE-186; THR-194; GLN-220; ILE-224; LEU-253; PHE-260; TRP-264; PHE-267; PHE-268; ILE-290; PHE-292; TYR-294; TYR-304 AND PHE-307</scope>
    <scope>CHARACTERIZATION OF VARIANT ALA-252</scope>
</reference>
<reference evidence="23" key="12">
    <citation type="journal article" date="2024" name="Nat. Commun.">
        <title>Molecular basis of human trace amine-associated receptor 1 activation.</title>
        <authorList>
            <person name="Zilberg G."/>
            <person name="Parpounas A.K."/>
            <person name="Warren A.L."/>
            <person name="Yang S."/>
            <person name="Wacker D."/>
        </authorList>
    </citation>
    <scope>STRUCTURE BY ELECTRON MICROSCOPY (3.35 ANGSTROMS) IN COMPLEX WITH GNAS; GNB1 AND GNG2</scope>
    <scope>FUNCTION</scope>
    <scope>DISULFIDE BONDS</scope>
    <scope>MUTAGENESIS OF ARG-83; CYS-88; CYS-96; ASP-103; SER-107; CYS-178; VAL-184; PHE-195; TRP-264; THR-271 AND ILE-290</scope>
</reference>
<proteinExistence type="evidence at protein level"/>
<name>TAAR1_HUMAN</name>
<protein>
    <recommendedName>
        <fullName evidence="14">Trace amine-associated receptor 1</fullName>
        <shortName>TaR-1</shortName>
        <shortName evidence="12">Trace amine receptor 1</shortName>
    </recommendedName>
</protein>
<sequence length="339" mass="39092">MMPFCHNIINISCVKNNWSNDVRASLYSLMVLIILTTLVGNLIVIVSISHFKQLHTPTNWLIHSMATVDFLLGCLVMPYSMVRSAEHCWYFGEVFCKIHTSTDIMLSSASIFHLSFISIDRYYAVCDPLRYKAKMNILVICVMIFISWSVPAVFAFGMIFLELNFKGAEEIYYKHVHCRGGCSVFFSKISGVLTFMTSFYIPGSIMLCVYYRIYLIAKEQARLISDANQKLQIGLEMKNGISQSKERKAVKTLGIVMGVFLICWCPFFICTVMDPFLHYIIPPTLNDVLIWFGYLNSTFNPMVYAFFYPWFRKALKMMLFGKIFQKDSSRCKLFLELSS</sequence>
<accession>Q96RJ0</accession>
<accession>Q2M1W5</accession>
<accession>Q3MIH8</accession>
<accession>Q5VUQ1</accession>
<comment type="function">
    <text evidence="3 4 5 6 7 8 9 10 11">Intracellular G-protein coupled receptor for trace amines, which recognizes endogenous amine-containing metabolites such as beta-phenylethylamine (beta-PEA), 3-iodothyronamine (T1AM), isoamylamine (IAA), cadaverine (CAD), cyclohexylamine (CHA), p-tyramine (p-TYR), trimethylamine (TMA), octopamine and tryptamine (PubMed:11459929, PubMed:11723224, PubMed:15718104, PubMed:31399635, PubMed:36100653, PubMed:37935376, PubMed:37935377, PubMed:37963465, PubMed:38168118). Also functions as a receptor for various drugs and psychoactive substances, such as amphetamine and methamphetamine (PubMed:31399635, PubMed:37935376, PubMed:37935377). Unresponsive to classical biogenic amines, such as epinephrine and histamine and only partially activated by dopamine and serotonin (PubMed:11459929, PubMed:11723224). Expressed in both the central and peripheral nervous system: TAAR1 activation regulates the activity of several neurotransmitter signaling pathways by (1) decreasing the basal firing rates of the neurons involved and by (2) lowering the sensitivity of receptors to neurotransmitters (PubMed:37935376, PubMed:37935377, PubMed:37963465, PubMed:38168118). Ligand binding causes a conformation change that triggers signaling via guanine nucleotide-binding proteins (G proteins) and modulates the activity of downstream effectors (PubMed:31399635, PubMed:37935376, PubMed:37963465). TAAR1 is coupled with different G(i)/G(o)-, G(s)- or G(q)/G(11) classes of G alpha proteins depending on the ligand (PubMed:31399635, PubMed:37935376, PubMed:37963465). CAD-binding is coupled to G(i)/G(o) G alpha proteins and mediates inhibition of adenylate cyclase activity (PubMed:37935376, PubMed:37963465). T1AM- or beta-PEA-binding is coupled to G(s) G alpha proteins and mediates activation of adenylate cyclase activity (PubMed:37935376, PubMed:37963465). CHA- or IAA-binding is coupled to G(q)/G(11) G alpha proteins and activates phospholipase C-beta, releasing diacylglycerol (DAG) and inositol 1,4,5-trisphosphate (IP3) second messengers (PubMed:37935376, PubMed:37963465). TMA-binding is coupled with all three G(i)/G(o)-, G(s)- or G(q)/G(11) G alpha protein subtypes (PubMed:37935376, PubMed:37963465). Amphetamine-binding is coupled with G(s)- or G(12)/G(13) G alpha protein subtypes (PubMed:31399635).</text>
</comment>
<comment type="activity regulation">
    <text evidence="7 8 9">Activated by SEP-363856 small molecule: IHCH-7179 acts both as an agonist activator for HTR1A and TAAR1.</text>
</comment>
<comment type="subcellular location">
    <subcellularLocation>
        <location evidence="4 6 7">Endomembrane system</location>
    </subcellularLocation>
    <subcellularLocation>
        <location evidence="15">Endoplasmic reticulum membrane</location>
        <topology evidence="8 9 10 11">Multi-pass membrane protein</topology>
    </subcellularLocation>
    <subcellularLocation>
        <location evidence="15">Cell membrane</location>
        <topology evidence="8 9 10 11">Multi-pass membrane protein</topology>
    </subcellularLocation>
    <text evidence="4 6 7">Localizes mainly intracellularly (PubMed:11723224, PubMed:31399635, PubMed:36100653). Partially colocalizes with the endoplasmic reticulum; also found at lower lever at the plasma membrane (PubMed:36100653).</text>
</comment>
<comment type="tissue specificity">
    <text evidence="3">Expressed at low level in both the central and peripheral nervous system (PubMed:11459929). Moderately expressed in stomach (PubMed:11459929). Low levels in amygdala, kidney, and lung, and small intestine (PubMed:11459929). Trace amounts in cerebellum, dorsal root ganglia, hippocampus, hypothalamus, liver, medulla, pancreas, pituitary, pontine reticular formation, prostate, skeletal muscle and spleen (PubMed:11459929).</text>
</comment>
<comment type="similarity">
    <text evidence="2">Belongs to the G-protein coupled receptor 1 family.</text>
</comment>
<gene>
    <name evidence="14 16" type="primary">TAAR1</name>
    <name evidence="12" type="synonym">TA1</name>
    <name evidence="13" type="synonym">TAR1</name>
    <name type="synonym">TRAR1</name>
</gene>